<organism>
    <name type="scientific">Ogataea methanolica</name>
    <name type="common">Yeast</name>
    <name type="synonym">Pichia methanolica</name>
    <dbReference type="NCBI Taxonomy" id="1156966"/>
    <lineage>
        <taxon>Eukaryota</taxon>
        <taxon>Fungi</taxon>
        <taxon>Dikarya</taxon>
        <taxon>Ascomycota</taxon>
        <taxon>Saccharomycotina</taxon>
        <taxon>Pichiomycetes</taxon>
        <taxon>Pichiales</taxon>
        <taxon>Pichiaceae</taxon>
        <taxon>Ogataea</taxon>
    </lineage>
</organism>
<proteinExistence type="inferred from homology"/>
<sequence>MDSQTVGILGGGQLGRMIVEAAHRLNIKTVILENGDQAPAKQINALDDHIDGSFNDPKAIAELAAKCDVLTVEIEHVDTDALVEVQKATGIKIFPSPETISLIKDKYLQKEHLIKNGIAVAESCSVESSAASLEEVGAKYGFPYMLKSRTMAYDGRGNFVVKDKSYIPEALKVLDDRPLYAEKWAPFSKELAVMVVRSIDGQVYSYPTVETIHQNNICHTVFAPARVNDTVQKKAQILADNAVKSFPGAGIFGVEMFLLQNGDLLVNEIAPRPHNSGHYTIDACVTSQFEAHVRAITGLPMPKNFTCLSTPSTQAIMLNVLGGDEQNGEFKMCKRALETPHASVYLYGKTTRPGRKMGHINIVSQSMTDCERRLHYIEGTTNSIPLEEQYTTDSIPGTSSKPLVGVIMGSDSDLPVMSLGCNILKQFNVPFEVTIVSAHRTPQRMAKYAIDAPKRGLKCIIAGAGGAAHLPGMVAAMTPLPVIGVPVKGSTLDGVDSLHSIVQMPRGIPVATVAINNATNAALLAITILGAGDPNTCLQWKFI</sequence>
<gene>
    <name type="primary">ADE1</name>
</gene>
<feature type="chain" id="PRO_0000075025" description="Phosphoribosylaminoimidazole carboxylase">
    <location>
        <begin position="1"/>
        <end position="543"/>
    </location>
</feature>
<feature type="domain" description="ATP-grasp" evidence="1">
    <location>
        <begin position="110"/>
        <end position="297"/>
    </location>
</feature>
<feature type="binding site" evidence="1">
    <location>
        <begin position="137"/>
        <end position="192"/>
    </location>
    <ligand>
        <name>ATP</name>
        <dbReference type="ChEBI" id="CHEBI:30616"/>
    </ligand>
</feature>
<reference key="1">
    <citation type="journal article" date="1993" name="Yeast">
        <title>The 5-aminoimidazole ribonucleotide-carboxylase structural gene of the methylotrophic yeast Pichia methanolica: cloning, sequencing and homology analysis.</title>
        <authorList>
            <person name="Hiep T.T."/>
            <person name="Kulikov V.N."/>
            <person name="Noskov V.N."/>
            <person name="Sizonenko G.I."/>
            <person name="Chernoff Y.O."/>
            <person name="Pavlov Y.I."/>
        </authorList>
    </citation>
    <scope>NUCLEOTIDE SEQUENCE [GENOMIC DNA]</scope>
</reference>
<accession>Q01930</accession>
<dbReference type="EC" id="4.1.1.21"/>
<dbReference type="EMBL" id="X76529">
    <property type="protein sequence ID" value="CAA54041.1"/>
    <property type="molecule type" value="Genomic_DNA"/>
</dbReference>
<dbReference type="PIR" id="S39112">
    <property type="entry name" value="S39112"/>
</dbReference>
<dbReference type="SMR" id="Q01930"/>
<dbReference type="BRENDA" id="4.1.1.21">
    <property type="organism ID" value="7013"/>
</dbReference>
<dbReference type="UniPathway" id="UPA00074">
    <property type="reaction ID" value="UER00130"/>
</dbReference>
<dbReference type="GO" id="GO:0005524">
    <property type="term" value="F:ATP binding"/>
    <property type="evidence" value="ECO:0007669"/>
    <property type="project" value="UniProtKB-KW"/>
</dbReference>
<dbReference type="GO" id="GO:0046872">
    <property type="term" value="F:metal ion binding"/>
    <property type="evidence" value="ECO:0007669"/>
    <property type="project" value="InterPro"/>
</dbReference>
<dbReference type="GO" id="GO:0004638">
    <property type="term" value="F:phosphoribosylaminoimidazole carboxylase activity"/>
    <property type="evidence" value="ECO:0007669"/>
    <property type="project" value="UniProtKB-EC"/>
</dbReference>
<dbReference type="GO" id="GO:0006189">
    <property type="term" value="P:'de novo' IMP biosynthetic process"/>
    <property type="evidence" value="ECO:0007669"/>
    <property type="project" value="UniProtKB-UniPathway"/>
</dbReference>
<dbReference type="FunFam" id="3.30.470.20:FF:000037">
    <property type="entry name" value="Phosphoribosylaminoimidazole carboxylase, chloroplastic"/>
    <property type="match status" value="1"/>
</dbReference>
<dbReference type="Gene3D" id="3.40.50.1970">
    <property type="match status" value="1"/>
</dbReference>
<dbReference type="Gene3D" id="3.40.50.20">
    <property type="match status" value="1"/>
</dbReference>
<dbReference type="Gene3D" id="3.30.1490.20">
    <property type="entry name" value="ATP-grasp fold, A domain"/>
    <property type="match status" value="1"/>
</dbReference>
<dbReference type="Gene3D" id="3.30.470.20">
    <property type="entry name" value="ATP-grasp fold, B domain"/>
    <property type="match status" value="1"/>
</dbReference>
<dbReference type="HAMAP" id="MF_01929">
    <property type="entry name" value="PurE_classI"/>
    <property type="match status" value="1"/>
</dbReference>
<dbReference type="HAMAP" id="MF_01928">
    <property type="entry name" value="PurK"/>
    <property type="match status" value="1"/>
</dbReference>
<dbReference type="InterPro" id="IPR016301">
    <property type="entry name" value="Ade2_fungi/plant"/>
</dbReference>
<dbReference type="InterPro" id="IPR011761">
    <property type="entry name" value="ATP-grasp"/>
</dbReference>
<dbReference type="InterPro" id="IPR003135">
    <property type="entry name" value="ATP-grasp_carboxylate-amine"/>
</dbReference>
<dbReference type="InterPro" id="IPR013815">
    <property type="entry name" value="ATP_grasp_subdomain_1"/>
</dbReference>
<dbReference type="InterPro" id="IPR016185">
    <property type="entry name" value="PreATP-grasp_dom_sf"/>
</dbReference>
<dbReference type="InterPro" id="IPR033747">
    <property type="entry name" value="PurE_ClassI"/>
</dbReference>
<dbReference type="InterPro" id="IPR000031">
    <property type="entry name" value="PurE_dom"/>
</dbReference>
<dbReference type="InterPro" id="IPR005875">
    <property type="entry name" value="PurK"/>
</dbReference>
<dbReference type="InterPro" id="IPR040686">
    <property type="entry name" value="PurK_C"/>
</dbReference>
<dbReference type="InterPro" id="IPR054350">
    <property type="entry name" value="PurT/PurK_preATP-grasp"/>
</dbReference>
<dbReference type="InterPro" id="IPR011054">
    <property type="entry name" value="Rudment_hybrid_motif"/>
</dbReference>
<dbReference type="NCBIfam" id="NF004679">
    <property type="entry name" value="PRK06019.1-5"/>
    <property type="match status" value="1"/>
</dbReference>
<dbReference type="NCBIfam" id="TIGR01162">
    <property type="entry name" value="purE"/>
    <property type="match status" value="1"/>
</dbReference>
<dbReference type="NCBIfam" id="TIGR01161">
    <property type="entry name" value="purK"/>
    <property type="match status" value="1"/>
</dbReference>
<dbReference type="PANTHER" id="PTHR11609:SF5">
    <property type="entry name" value="PHOSPHORIBOSYLAMINOIMIDAZOLE CARBOXYLASE"/>
    <property type="match status" value="1"/>
</dbReference>
<dbReference type="PANTHER" id="PTHR11609">
    <property type="entry name" value="PURINE BIOSYNTHESIS PROTEIN 6/7, PUR6/7"/>
    <property type="match status" value="1"/>
</dbReference>
<dbReference type="Pfam" id="PF00731">
    <property type="entry name" value="AIRC"/>
    <property type="match status" value="1"/>
</dbReference>
<dbReference type="Pfam" id="PF02222">
    <property type="entry name" value="ATP-grasp"/>
    <property type="match status" value="1"/>
</dbReference>
<dbReference type="Pfam" id="PF17769">
    <property type="entry name" value="PurK_C"/>
    <property type="match status" value="1"/>
</dbReference>
<dbReference type="Pfam" id="PF22660">
    <property type="entry name" value="RS_preATP-grasp-like"/>
    <property type="match status" value="1"/>
</dbReference>
<dbReference type="PIRSF" id="PIRSF001340">
    <property type="entry name" value="AIR_carboxylase"/>
    <property type="match status" value="1"/>
</dbReference>
<dbReference type="SMART" id="SM01001">
    <property type="entry name" value="AIRC"/>
    <property type="match status" value="1"/>
</dbReference>
<dbReference type="SUPFAM" id="SSF56059">
    <property type="entry name" value="Glutathione synthetase ATP-binding domain-like"/>
    <property type="match status" value="1"/>
</dbReference>
<dbReference type="SUPFAM" id="SSF52255">
    <property type="entry name" value="N5-CAIR mutase (phosphoribosylaminoimidazole carboxylase, PurE)"/>
    <property type="match status" value="1"/>
</dbReference>
<dbReference type="SUPFAM" id="SSF52440">
    <property type="entry name" value="PreATP-grasp domain"/>
    <property type="match status" value="1"/>
</dbReference>
<dbReference type="SUPFAM" id="SSF51246">
    <property type="entry name" value="Rudiment single hybrid motif"/>
    <property type="match status" value="1"/>
</dbReference>
<dbReference type="PROSITE" id="PS50975">
    <property type="entry name" value="ATP_GRASP"/>
    <property type="match status" value="1"/>
</dbReference>
<evidence type="ECO:0000255" key="1">
    <source>
        <dbReference type="PROSITE-ProRule" id="PRU00409"/>
    </source>
</evidence>
<evidence type="ECO:0000305" key="2"/>
<protein>
    <recommendedName>
        <fullName>Phosphoribosylaminoimidazole carboxylase</fullName>
        <ecNumber>4.1.1.21</ecNumber>
    </recommendedName>
    <alternativeName>
        <fullName>AIR carboxylase</fullName>
        <shortName>AIRC</shortName>
    </alternativeName>
</protein>
<name>PUR6_OGAME</name>
<keyword id="KW-0067">ATP-binding</keyword>
<keyword id="KW-0210">Decarboxylase</keyword>
<keyword id="KW-0456">Lyase</keyword>
<keyword id="KW-0547">Nucleotide-binding</keyword>
<keyword id="KW-0658">Purine biosynthesis</keyword>
<comment type="catalytic activity">
    <reaction>
        <text>5-amino-1-(5-phospho-D-ribosyl)imidazole-4-carboxylate + H(+) = 5-amino-1-(5-phospho-beta-D-ribosyl)imidazole + CO2</text>
        <dbReference type="Rhea" id="RHEA:10792"/>
        <dbReference type="ChEBI" id="CHEBI:15378"/>
        <dbReference type="ChEBI" id="CHEBI:16526"/>
        <dbReference type="ChEBI" id="CHEBI:77657"/>
        <dbReference type="ChEBI" id="CHEBI:137981"/>
        <dbReference type="EC" id="4.1.1.21"/>
    </reaction>
</comment>
<comment type="pathway">
    <text>Purine metabolism; IMP biosynthesis via de novo pathway; 5-amino-1-(5-phospho-D-ribosyl)imidazole-4-carboxylate from 5-amino-1-(5-phospho-D-ribosyl)imidazole (carboxylase route): step 1/1.</text>
</comment>
<comment type="similarity">
    <text evidence="2">In the C-terminal section; belongs to the AIR carboxylase family. Class I subfamily.</text>
</comment>